<name>TCPF_VIBCH</name>
<dbReference type="EMBL" id="L01623">
    <property type="protein sequence ID" value="AAA27566.1"/>
    <property type="molecule type" value="Genomic_DNA"/>
</dbReference>
<dbReference type="EMBL" id="X64098">
    <property type="protein sequence ID" value="CAA45464.1"/>
    <property type="molecule type" value="Genomic_DNA"/>
</dbReference>
<dbReference type="EMBL" id="M93963">
    <property type="protein sequence ID" value="AAA27564.1"/>
    <property type="molecule type" value="Genomic_DNA"/>
</dbReference>
<dbReference type="EMBL" id="AE003852">
    <property type="protein sequence ID" value="AAF94000.1"/>
    <property type="molecule type" value="Genomic_DNA"/>
</dbReference>
<dbReference type="PIR" id="JN0526">
    <property type="entry name" value="JN0526"/>
</dbReference>
<dbReference type="RefSeq" id="NP_230485.1">
    <property type="nucleotide sequence ID" value="NC_002505.1"/>
</dbReference>
<dbReference type="PDB" id="3OC5">
    <property type="method" value="X-ray"/>
    <property type="resolution" value="2.40 A"/>
    <property type="chains" value="A=21-338"/>
</dbReference>
<dbReference type="PDB" id="3OC8">
    <property type="method" value="X-ray"/>
    <property type="resolution" value="2.10 A"/>
    <property type="chains" value="A=206-338"/>
</dbReference>
<dbReference type="PDB" id="7W64">
    <property type="method" value="X-ray"/>
    <property type="resolution" value="2.30 A"/>
    <property type="chains" value="G/H/I/J/K/L=21-35"/>
</dbReference>
<dbReference type="PDBsum" id="3OC5"/>
<dbReference type="PDBsum" id="3OC8"/>
<dbReference type="PDBsum" id="7W64"/>
<dbReference type="SMR" id="P0C6Q5"/>
<dbReference type="STRING" id="243277.VC_0837"/>
<dbReference type="DNASU" id="2614504"/>
<dbReference type="EnsemblBacteria" id="AAF94000">
    <property type="protein sequence ID" value="AAF94000"/>
    <property type="gene ID" value="VC_0837"/>
</dbReference>
<dbReference type="KEGG" id="vch:VC_0837"/>
<dbReference type="PATRIC" id="fig|243277.26.peg.798"/>
<dbReference type="HOGENOM" id="CLU_839222_0_0_6"/>
<dbReference type="EvolutionaryTrace" id="P0C6Q5"/>
<dbReference type="Proteomes" id="UP000000584">
    <property type="component" value="Chromosome 1"/>
</dbReference>
<dbReference type="GO" id="GO:0009279">
    <property type="term" value="C:cell outer membrane"/>
    <property type="evidence" value="ECO:0007669"/>
    <property type="project" value="UniProtKB-SubCell"/>
</dbReference>
<dbReference type="Gene3D" id="2.60.40.3240">
    <property type="entry name" value="Vibrio cholerae toxin co-regulated pilus biosynthesis protein F, C-terminal domain"/>
    <property type="match status" value="1"/>
</dbReference>
<dbReference type="InterPro" id="IPR009405">
    <property type="entry name" value="TcpF"/>
</dbReference>
<dbReference type="InterPro" id="IPR043125">
    <property type="entry name" value="TcpF_C"/>
</dbReference>
<dbReference type="Pfam" id="PF06340">
    <property type="entry name" value="TcpF"/>
    <property type="match status" value="1"/>
</dbReference>
<dbReference type="PIRSF" id="PIRSF020763">
    <property type="entry name" value="TcpF"/>
    <property type="match status" value="1"/>
</dbReference>
<proteinExistence type="evidence at protein level"/>
<feature type="signal peptide" evidence="1">
    <location>
        <begin position="1"/>
        <end position="20"/>
    </location>
</feature>
<feature type="chain" id="PRO_0000022477" description="Toxin coregulated pilus biosynthesis protein F">
    <location>
        <begin position="21"/>
        <end position="338"/>
    </location>
</feature>
<feature type="sequence conflict" description="In Ref. 2; CAA45464." evidence="2" ref="2">
    <original>FND</original>
    <variation>INE</variation>
    <location>
        <begin position="21"/>
        <end position="23"/>
    </location>
</feature>
<feature type="sequence conflict" description="In Ref. 2; CAA45464." evidence="2" ref="2">
    <original>D</original>
    <variation>E</variation>
    <location>
        <position position="40"/>
    </location>
</feature>
<feature type="sequence conflict" description="In Ref. 4; AAF94000." evidence="2" ref="4">
    <original>N</original>
    <variation>S</variation>
    <location>
        <position position="236"/>
    </location>
</feature>
<feature type="sequence conflict" description="In Ref. 4; AAF94000." evidence="2" ref="4">
    <original>N</original>
    <variation>G</variation>
    <location>
        <position position="281"/>
    </location>
</feature>
<feature type="turn" evidence="3">
    <location>
        <begin position="47"/>
        <end position="50"/>
    </location>
</feature>
<feature type="helix" evidence="3">
    <location>
        <begin position="51"/>
        <end position="56"/>
    </location>
</feature>
<feature type="helix" evidence="3">
    <location>
        <begin position="61"/>
        <end position="68"/>
    </location>
</feature>
<feature type="helix" evidence="3">
    <location>
        <begin position="78"/>
        <end position="82"/>
    </location>
</feature>
<feature type="helix" evidence="3">
    <location>
        <begin position="96"/>
        <end position="104"/>
    </location>
</feature>
<feature type="helix" evidence="3">
    <location>
        <begin position="108"/>
        <end position="114"/>
    </location>
</feature>
<feature type="helix" evidence="3">
    <location>
        <begin position="116"/>
        <end position="118"/>
    </location>
</feature>
<feature type="helix" evidence="3">
    <location>
        <begin position="132"/>
        <end position="143"/>
    </location>
</feature>
<feature type="helix" evidence="3">
    <location>
        <begin position="149"/>
        <end position="154"/>
    </location>
</feature>
<feature type="strand" evidence="3">
    <location>
        <begin position="156"/>
        <end position="164"/>
    </location>
</feature>
<feature type="strand" evidence="3">
    <location>
        <begin position="167"/>
        <end position="175"/>
    </location>
</feature>
<feature type="turn" evidence="3">
    <location>
        <begin position="190"/>
        <end position="192"/>
    </location>
</feature>
<feature type="strand" evidence="3">
    <location>
        <begin position="200"/>
        <end position="204"/>
    </location>
</feature>
<feature type="strand" evidence="4">
    <location>
        <begin position="228"/>
        <end position="234"/>
    </location>
</feature>
<feature type="helix" evidence="4">
    <location>
        <begin position="235"/>
        <end position="240"/>
    </location>
</feature>
<feature type="strand" evidence="4">
    <location>
        <begin position="248"/>
        <end position="256"/>
    </location>
</feature>
<feature type="turn" evidence="4">
    <location>
        <begin position="260"/>
        <end position="262"/>
    </location>
</feature>
<feature type="strand" evidence="4">
    <location>
        <begin position="269"/>
        <end position="274"/>
    </location>
</feature>
<feature type="strand" evidence="4">
    <location>
        <begin position="286"/>
        <end position="292"/>
    </location>
</feature>
<feature type="helix" evidence="4">
    <location>
        <begin position="295"/>
        <end position="297"/>
    </location>
</feature>
<feature type="helix" evidence="4">
    <location>
        <begin position="301"/>
        <end position="306"/>
    </location>
</feature>
<feature type="strand" evidence="4">
    <location>
        <begin position="313"/>
        <end position="320"/>
    </location>
</feature>
<feature type="helix" evidence="4">
    <location>
        <begin position="335"/>
        <end position="337"/>
    </location>
</feature>
<organism>
    <name type="scientific">Vibrio cholerae serotype O1 (strain ATCC 39315 / El Tor Inaba N16961)</name>
    <dbReference type="NCBI Taxonomy" id="243277"/>
    <lineage>
        <taxon>Bacteria</taxon>
        <taxon>Pseudomonadati</taxon>
        <taxon>Pseudomonadota</taxon>
        <taxon>Gammaproteobacteria</taxon>
        <taxon>Vibrionales</taxon>
        <taxon>Vibrionaceae</taxon>
        <taxon>Vibrio</taxon>
    </lineage>
</organism>
<gene>
    <name type="primary">tcpF</name>
    <name type="ordered locus">VC_0837</name>
</gene>
<sequence>MRYKKTLMLSIMITSFNSFAFNDNYSSTSTVYATSNEATDSRGSEHLRYPYLECIKIGMSRDYLENCVKVSFPTSQDMFYDAYPSTESDGAKTRTKEDFSARLLAGDYDSLQKLYIDFYLAQTTFDWEIPTRDQIETLVNYANEGKLSTALNQEYITGRFLTKENGRYDIVNVGGVPDNTPVKLPAIVSKRGLMGTTSVVNAIPNEIYPHIKVYEGTLSRLKPGGAMIAVLEYDVNELSKHGYTNLWDVQFKVLVGVPHAETGVIYDPVYEETVKPYQPSNNLTGKKLYNVSTNDMHNGYKWSNTMFSNSNYKTQILLTKGDGSGVKLYSKAYSENFK</sequence>
<comment type="function">
    <text>Involved in TCP pilus biogenesis. May be a channel protein.</text>
</comment>
<comment type="subcellular location">
    <subcellularLocation>
        <location evidence="2">Cell outer membrane</location>
        <topology evidence="2">Peripheral membrane protein</topology>
    </subcellularLocation>
</comment>
<reference key="1">
    <citation type="journal article" date="1992" name="J. Bacteriol.">
        <title>The virulence gene activator ToxT from Vibrio cholerae is a member of the AraC family of transcriptional activators.</title>
        <authorList>
            <person name="Higgins D.E."/>
            <person name="Nazareno E."/>
            <person name="DiRita V.J."/>
        </authorList>
    </citation>
    <scope>NUCLEOTIDE SEQUENCE [GENOMIC DNA]</scope>
</reference>
<reference key="2">
    <citation type="journal article" date="1993" name="Gene">
        <title>Genetic organization and sequence of the promoter-distal region of the tcp gene cluster of Vibrio cholerae.</title>
        <authorList>
            <person name="Ogierman M.A."/>
            <person name="Zabihi S."/>
            <person name="Mourtzios L."/>
            <person name="Manning P.A."/>
        </authorList>
    </citation>
    <scope>NUCLEOTIDE SEQUENCE [GENOMIC DNA]</scope>
    <source>
        <strain>Classical Inaba Z17561 / Serotype O1</strain>
    </source>
</reference>
<reference key="3">
    <citation type="journal article" date="1993" name="Gene">
        <title>Biogenesis and regulation of the Vibrio cholerae toxin-coregulated pilus: analogies to other virulence factor secretory systems.</title>
        <authorList>
            <person name="Kaufman M.R."/>
            <person name="Shaw C.E."/>
            <person name="Jones I.D."/>
            <person name="Taylor R.K."/>
        </authorList>
    </citation>
    <scope>NUCLEOTIDE SEQUENCE [GENOMIC DNA]</scope>
</reference>
<reference key="4">
    <citation type="journal article" date="2000" name="Nature">
        <title>DNA sequence of both chromosomes of the cholera pathogen Vibrio cholerae.</title>
        <authorList>
            <person name="Heidelberg J.F."/>
            <person name="Eisen J.A."/>
            <person name="Nelson W.C."/>
            <person name="Clayton R.A."/>
            <person name="Gwinn M.L."/>
            <person name="Dodson R.J."/>
            <person name="Haft D.H."/>
            <person name="Hickey E.K."/>
            <person name="Peterson J.D."/>
            <person name="Umayam L.A."/>
            <person name="Gill S.R."/>
            <person name="Nelson K.E."/>
            <person name="Read T.D."/>
            <person name="Tettelin H."/>
            <person name="Richardson D.L."/>
            <person name="Ermolaeva M.D."/>
            <person name="Vamathevan J.J."/>
            <person name="Bass S."/>
            <person name="Qin H."/>
            <person name="Dragoi I."/>
            <person name="Sellers P."/>
            <person name="McDonald L.A."/>
            <person name="Utterback T.R."/>
            <person name="Fleischmann R.D."/>
            <person name="Nierman W.C."/>
            <person name="White O."/>
            <person name="Salzberg S.L."/>
            <person name="Smith H.O."/>
            <person name="Colwell R.R."/>
            <person name="Mekalanos J.J."/>
            <person name="Venter J.C."/>
            <person name="Fraser C.M."/>
        </authorList>
    </citation>
    <scope>NUCLEOTIDE SEQUENCE [LARGE SCALE GENOMIC DNA]</scope>
    <source>
        <strain>ATCC 39315 / El Tor Inaba N16961</strain>
    </source>
</reference>
<keyword id="KW-0002">3D-structure</keyword>
<keyword id="KW-0998">Cell outer membrane</keyword>
<keyword id="KW-0472">Membrane</keyword>
<keyword id="KW-1185">Reference proteome</keyword>
<keyword id="KW-0732">Signal</keyword>
<protein>
    <recommendedName>
        <fullName>Toxin coregulated pilus biosynthesis protein F</fullName>
    </recommendedName>
    <alternativeName>
        <fullName>TCP pilus biosynthesis protein TcpF</fullName>
    </alternativeName>
</protein>
<accession>P0C6Q5</accession>
<accession>P29488</accession>
<accession>Q9KTQ9</accession>
<evidence type="ECO:0000255" key="1"/>
<evidence type="ECO:0000305" key="2"/>
<evidence type="ECO:0007829" key="3">
    <source>
        <dbReference type="PDB" id="3OC5"/>
    </source>
</evidence>
<evidence type="ECO:0007829" key="4">
    <source>
        <dbReference type="PDB" id="3OC8"/>
    </source>
</evidence>